<reference key="1">
    <citation type="journal article" date="2008" name="J. Bacteriol.">
        <title>The pangenome structure of Escherichia coli: comparative genomic analysis of E. coli commensal and pathogenic isolates.</title>
        <authorList>
            <person name="Rasko D.A."/>
            <person name="Rosovitz M.J."/>
            <person name="Myers G.S.A."/>
            <person name="Mongodin E.F."/>
            <person name="Fricke W.F."/>
            <person name="Gajer P."/>
            <person name="Crabtree J."/>
            <person name="Sebaihia M."/>
            <person name="Thomson N.R."/>
            <person name="Chaudhuri R."/>
            <person name="Henderson I.R."/>
            <person name="Sperandio V."/>
            <person name="Ravel J."/>
        </authorList>
    </citation>
    <scope>NUCLEOTIDE SEQUENCE [LARGE SCALE GENOMIC DNA]</scope>
    <source>
        <strain>E24377A / ETEC</strain>
    </source>
</reference>
<sequence>MSNVPAELKYSKEHEWLRKEADGTYTVGITEHAQELLGDMVFVDLPEVGATVSAGDDCAVAESVKAASDIYAPVSGEIVAVNDALSDSPELVNSEPYAGGWIFKIKASDESELESLLDATAYETLLEDE</sequence>
<evidence type="ECO:0000255" key="1">
    <source>
        <dbReference type="HAMAP-Rule" id="MF_00272"/>
    </source>
</evidence>
<evidence type="ECO:0000255" key="2">
    <source>
        <dbReference type="PROSITE-ProRule" id="PRU01066"/>
    </source>
</evidence>
<gene>
    <name evidence="1" type="primary">gcvH</name>
    <name type="ordered locus">EcE24377A_3231</name>
</gene>
<organism>
    <name type="scientific">Escherichia coli O139:H28 (strain E24377A / ETEC)</name>
    <dbReference type="NCBI Taxonomy" id="331111"/>
    <lineage>
        <taxon>Bacteria</taxon>
        <taxon>Pseudomonadati</taxon>
        <taxon>Pseudomonadota</taxon>
        <taxon>Gammaproteobacteria</taxon>
        <taxon>Enterobacterales</taxon>
        <taxon>Enterobacteriaceae</taxon>
        <taxon>Escherichia</taxon>
    </lineage>
</organism>
<feature type="chain" id="PRO_1000059179" description="Glycine cleavage system H protein">
    <location>
        <begin position="1"/>
        <end position="129"/>
    </location>
</feature>
<feature type="domain" description="Lipoyl-binding" evidence="2">
    <location>
        <begin position="24"/>
        <end position="106"/>
    </location>
</feature>
<feature type="modified residue" description="N6-lipoyllysine" evidence="1">
    <location>
        <position position="65"/>
    </location>
</feature>
<accession>A7ZR13</accession>
<name>GCSH_ECO24</name>
<protein>
    <recommendedName>
        <fullName evidence="1">Glycine cleavage system H protein</fullName>
    </recommendedName>
</protein>
<comment type="function">
    <text evidence="1">The glycine cleavage system catalyzes the degradation of glycine. The H protein shuttles the methylamine group of glycine from the P protein to the T protein.</text>
</comment>
<comment type="cofactor">
    <cofactor evidence="1">
        <name>(R)-lipoate</name>
        <dbReference type="ChEBI" id="CHEBI:83088"/>
    </cofactor>
    <text evidence="1">Binds 1 lipoyl cofactor covalently.</text>
</comment>
<comment type="subunit">
    <text evidence="1">The glycine cleavage system is composed of four proteins: P, T, L and H.</text>
</comment>
<comment type="similarity">
    <text evidence="1">Belongs to the GcvH family.</text>
</comment>
<dbReference type="EMBL" id="CP000800">
    <property type="protein sequence ID" value="ABV18753.1"/>
    <property type="molecule type" value="Genomic_DNA"/>
</dbReference>
<dbReference type="RefSeq" id="WP_001333026.1">
    <property type="nucleotide sequence ID" value="NC_009801.1"/>
</dbReference>
<dbReference type="SMR" id="A7ZR13"/>
<dbReference type="GeneID" id="75205259"/>
<dbReference type="KEGG" id="ecw:EcE24377A_3231"/>
<dbReference type="HOGENOM" id="CLU_097408_2_1_6"/>
<dbReference type="Proteomes" id="UP000001122">
    <property type="component" value="Chromosome"/>
</dbReference>
<dbReference type="GO" id="GO:0005829">
    <property type="term" value="C:cytosol"/>
    <property type="evidence" value="ECO:0007669"/>
    <property type="project" value="TreeGrafter"/>
</dbReference>
<dbReference type="GO" id="GO:0005960">
    <property type="term" value="C:glycine cleavage complex"/>
    <property type="evidence" value="ECO:0007669"/>
    <property type="project" value="InterPro"/>
</dbReference>
<dbReference type="GO" id="GO:0019464">
    <property type="term" value="P:glycine decarboxylation via glycine cleavage system"/>
    <property type="evidence" value="ECO:0007669"/>
    <property type="project" value="UniProtKB-UniRule"/>
</dbReference>
<dbReference type="CDD" id="cd06848">
    <property type="entry name" value="GCS_H"/>
    <property type="match status" value="1"/>
</dbReference>
<dbReference type="FunFam" id="2.40.50.100:FF:000011">
    <property type="entry name" value="Glycine cleavage system H protein"/>
    <property type="match status" value="1"/>
</dbReference>
<dbReference type="Gene3D" id="2.40.50.100">
    <property type="match status" value="1"/>
</dbReference>
<dbReference type="HAMAP" id="MF_00272">
    <property type="entry name" value="GcvH"/>
    <property type="match status" value="1"/>
</dbReference>
<dbReference type="InterPro" id="IPR003016">
    <property type="entry name" value="2-oxoA_DH_lipoyl-BS"/>
</dbReference>
<dbReference type="InterPro" id="IPR000089">
    <property type="entry name" value="Biotin_lipoyl"/>
</dbReference>
<dbReference type="InterPro" id="IPR002930">
    <property type="entry name" value="GCV_H"/>
</dbReference>
<dbReference type="InterPro" id="IPR033753">
    <property type="entry name" value="GCV_H/Fam206"/>
</dbReference>
<dbReference type="InterPro" id="IPR017453">
    <property type="entry name" value="GCV_H_sub"/>
</dbReference>
<dbReference type="InterPro" id="IPR011053">
    <property type="entry name" value="Single_hybrid_motif"/>
</dbReference>
<dbReference type="NCBIfam" id="TIGR00527">
    <property type="entry name" value="gcvH"/>
    <property type="match status" value="1"/>
</dbReference>
<dbReference type="NCBIfam" id="NF002270">
    <property type="entry name" value="PRK01202.1"/>
    <property type="match status" value="1"/>
</dbReference>
<dbReference type="PANTHER" id="PTHR11715">
    <property type="entry name" value="GLYCINE CLEAVAGE SYSTEM H PROTEIN"/>
    <property type="match status" value="1"/>
</dbReference>
<dbReference type="PANTHER" id="PTHR11715:SF3">
    <property type="entry name" value="GLYCINE CLEAVAGE SYSTEM H PROTEIN-RELATED"/>
    <property type="match status" value="1"/>
</dbReference>
<dbReference type="Pfam" id="PF01597">
    <property type="entry name" value="GCV_H"/>
    <property type="match status" value="1"/>
</dbReference>
<dbReference type="SUPFAM" id="SSF51230">
    <property type="entry name" value="Single hybrid motif"/>
    <property type="match status" value="1"/>
</dbReference>
<dbReference type="PROSITE" id="PS50968">
    <property type="entry name" value="BIOTINYL_LIPOYL"/>
    <property type="match status" value="1"/>
</dbReference>
<dbReference type="PROSITE" id="PS00189">
    <property type="entry name" value="LIPOYL"/>
    <property type="match status" value="1"/>
</dbReference>
<keyword id="KW-0450">Lipoyl</keyword>
<keyword id="KW-1185">Reference proteome</keyword>
<proteinExistence type="inferred from homology"/>